<sequence length="442" mass="49145">MSDTIAAIATAHGVGSISIVRLSGERALEFALKLSHKTKLTPRHATFTKLFNQNNEIIDEAIMIYFKAPYSFTGEDIVEFQTHGGFSVSEVLLEELVSLGARLALAGEFSKRACLNGKMTPLKALNIQDLILSKSALAAKIIARNMQGNLGELLEKIRTDLVKTLAFVETSIDYADDDLPSDLLEQISTMCEENSKILKEIYTLSQSKKGLIEGFKIAIVGKPNVGKSSLLNALLSYERAIVSDIAGTTRDTIEENFKLGTHLLRIIDTAGIRESKDVIEQIGVALSKKSLEDADIILAVFDASRVQDKEDEKIFDLLANTDKKIFWILNKSDLENVFKNTQNKNFIKLSAQKDITLLKEELQNYLNSFDSEGIMVSSLDLINACKISSEAIFRAKGLLEESSLEFFAFELNLAINELARFTKDFQRDEILDEMFGNFCLGK</sequence>
<name>MNME_CAMJE</name>
<gene>
    <name evidence="1" type="primary">mnmE</name>
    <name evidence="1" type="synonym">thdF</name>
    <name evidence="1" type="synonym">trmE</name>
    <name type="ordered locus">Cj0956c</name>
</gene>
<organism>
    <name type="scientific">Campylobacter jejuni subsp. jejuni serotype O:2 (strain ATCC 700819 / NCTC 11168)</name>
    <dbReference type="NCBI Taxonomy" id="192222"/>
    <lineage>
        <taxon>Bacteria</taxon>
        <taxon>Pseudomonadati</taxon>
        <taxon>Campylobacterota</taxon>
        <taxon>Epsilonproteobacteria</taxon>
        <taxon>Campylobacterales</taxon>
        <taxon>Campylobacteraceae</taxon>
        <taxon>Campylobacter</taxon>
    </lineage>
</organism>
<comment type="function">
    <text evidence="1">Exhibits a very high intrinsic GTPase hydrolysis rate. Involved in the addition of a carboxymethylaminomethyl (cmnm) group at the wobble position (U34) of certain tRNAs, forming tRNA-cmnm(5)s(2)U34.</text>
</comment>
<comment type="cofactor">
    <cofactor evidence="1">
        <name>K(+)</name>
        <dbReference type="ChEBI" id="CHEBI:29103"/>
    </cofactor>
    <text evidence="1">Binds 1 potassium ion per subunit.</text>
</comment>
<comment type="subunit">
    <text evidence="1">Homodimer. Heterotetramer of two MnmE and two MnmG subunits.</text>
</comment>
<comment type="subcellular location">
    <subcellularLocation>
        <location evidence="1">Cytoplasm</location>
    </subcellularLocation>
</comment>
<comment type="similarity">
    <text evidence="1">Belongs to the TRAFAC class TrmE-Era-EngA-EngB-Septin-like GTPase superfamily. TrmE GTPase family.</text>
</comment>
<protein>
    <recommendedName>
        <fullName evidence="1">tRNA modification GTPase MnmE</fullName>
        <ecNumber evidence="1">3.6.-.-</ecNumber>
    </recommendedName>
</protein>
<keyword id="KW-0963">Cytoplasm</keyword>
<keyword id="KW-0342">GTP-binding</keyword>
<keyword id="KW-0378">Hydrolase</keyword>
<keyword id="KW-0460">Magnesium</keyword>
<keyword id="KW-0479">Metal-binding</keyword>
<keyword id="KW-0547">Nucleotide-binding</keyword>
<keyword id="KW-0630">Potassium</keyword>
<keyword id="KW-1185">Reference proteome</keyword>
<keyword id="KW-0819">tRNA processing</keyword>
<evidence type="ECO:0000255" key="1">
    <source>
        <dbReference type="HAMAP-Rule" id="MF_00379"/>
    </source>
</evidence>
<feature type="chain" id="PRO_0000188860" description="tRNA modification GTPase MnmE">
    <location>
        <begin position="1"/>
        <end position="442"/>
    </location>
</feature>
<feature type="domain" description="TrmE-type G">
    <location>
        <begin position="214"/>
        <end position="367"/>
    </location>
</feature>
<feature type="binding site" evidence="1">
    <location>
        <position position="21"/>
    </location>
    <ligand>
        <name>(6S)-5-formyl-5,6,7,8-tetrahydrofolate</name>
        <dbReference type="ChEBI" id="CHEBI:57457"/>
    </ligand>
</feature>
<feature type="binding site" evidence="1">
    <location>
        <position position="79"/>
    </location>
    <ligand>
        <name>(6S)-5-formyl-5,6,7,8-tetrahydrofolate</name>
        <dbReference type="ChEBI" id="CHEBI:57457"/>
    </ligand>
</feature>
<feature type="binding site" evidence="1">
    <location>
        <position position="118"/>
    </location>
    <ligand>
        <name>(6S)-5-formyl-5,6,7,8-tetrahydrofolate</name>
        <dbReference type="ChEBI" id="CHEBI:57457"/>
    </ligand>
</feature>
<feature type="binding site" evidence="1">
    <location>
        <begin position="224"/>
        <end position="229"/>
    </location>
    <ligand>
        <name>GTP</name>
        <dbReference type="ChEBI" id="CHEBI:37565"/>
    </ligand>
</feature>
<feature type="binding site" evidence="1">
    <location>
        <position position="224"/>
    </location>
    <ligand>
        <name>K(+)</name>
        <dbReference type="ChEBI" id="CHEBI:29103"/>
    </ligand>
</feature>
<feature type="binding site" evidence="1">
    <location>
        <position position="228"/>
    </location>
    <ligand>
        <name>Mg(2+)</name>
        <dbReference type="ChEBI" id="CHEBI:18420"/>
    </ligand>
</feature>
<feature type="binding site" evidence="1">
    <location>
        <begin position="243"/>
        <end position="249"/>
    </location>
    <ligand>
        <name>GTP</name>
        <dbReference type="ChEBI" id="CHEBI:37565"/>
    </ligand>
</feature>
<feature type="binding site" evidence="1">
    <location>
        <position position="243"/>
    </location>
    <ligand>
        <name>K(+)</name>
        <dbReference type="ChEBI" id="CHEBI:29103"/>
    </ligand>
</feature>
<feature type="binding site" evidence="1">
    <location>
        <position position="245"/>
    </location>
    <ligand>
        <name>K(+)</name>
        <dbReference type="ChEBI" id="CHEBI:29103"/>
    </ligand>
</feature>
<feature type="binding site" evidence="1">
    <location>
        <position position="248"/>
    </location>
    <ligand>
        <name>K(+)</name>
        <dbReference type="ChEBI" id="CHEBI:29103"/>
    </ligand>
</feature>
<feature type="binding site" evidence="1">
    <location>
        <position position="249"/>
    </location>
    <ligand>
        <name>Mg(2+)</name>
        <dbReference type="ChEBI" id="CHEBI:18420"/>
    </ligand>
</feature>
<feature type="binding site" evidence="1">
    <location>
        <begin position="268"/>
        <end position="271"/>
    </location>
    <ligand>
        <name>GTP</name>
        <dbReference type="ChEBI" id="CHEBI:37565"/>
    </ligand>
</feature>
<feature type="binding site" evidence="1">
    <location>
        <position position="442"/>
    </location>
    <ligand>
        <name>(6S)-5-formyl-5,6,7,8-tetrahydrofolate</name>
        <dbReference type="ChEBI" id="CHEBI:57457"/>
    </ligand>
</feature>
<proteinExistence type="inferred from homology"/>
<dbReference type="EC" id="3.6.-.-" evidence="1"/>
<dbReference type="EMBL" id="AL111168">
    <property type="protein sequence ID" value="CAL35076.1"/>
    <property type="molecule type" value="Genomic_DNA"/>
</dbReference>
<dbReference type="PIR" id="C81370">
    <property type="entry name" value="C81370"/>
</dbReference>
<dbReference type="RefSeq" id="WP_002853397.1">
    <property type="nucleotide sequence ID" value="NZ_SZUC01000001.1"/>
</dbReference>
<dbReference type="RefSeq" id="YP_002344354.1">
    <property type="nucleotide sequence ID" value="NC_002163.1"/>
</dbReference>
<dbReference type="SMR" id="Q9PNX9"/>
<dbReference type="IntAct" id="Q9PNX9">
    <property type="interactions" value="10"/>
</dbReference>
<dbReference type="STRING" id="192222.Cj0956c"/>
<dbReference type="PaxDb" id="192222-Cj0956c"/>
<dbReference type="EnsemblBacteria" id="CAL35076">
    <property type="protein sequence ID" value="CAL35076"/>
    <property type="gene ID" value="Cj0956c"/>
</dbReference>
<dbReference type="GeneID" id="905249"/>
<dbReference type="KEGG" id="cje:Cj0956c"/>
<dbReference type="PATRIC" id="fig|192222.6.peg.940"/>
<dbReference type="eggNOG" id="COG0486">
    <property type="taxonomic scope" value="Bacteria"/>
</dbReference>
<dbReference type="HOGENOM" id="CLU_019624_4_1_7"/>
<dbReference type="OrthoDB" id="9805918at2"/>
<dbReference type="Proteomes" id="UP000000799">
    <property type="component" value="Chromosome"/>
</dbReference>
<dbReference type="GO" id="GO:0005829">
    <property type="term" value="C:cytosol"/>
    <property type="evidence" value="ECO:0007669"/>
    <property type="project" value="TreeGrafter"/>
</dbReference>
<dbReference type="GO" id="GO:0005525">
    <property type="term" value="F:GTP binding"/>
    <property type="evidence" value="ECO:0007669"/>
    <property type="project" value="UniProtKB-UniRule"/>
</dbReference>
<dbReference type="GO" id="GO:0003924">
    <property type="term" value="F:GTPase activity"/>
    <property type="evidence" value="ECO:0007669"/>
    <property type="project" value="UniProtKB-UniRule"/>
</dbReference>
<dbReference type="GO" id="GO:0046872">
    <property type="term" value="F:metal ion binding"/>
    <property type="evidence" value="ECO:0007669"/>
    <property type="project" value="UniProtKB-KW"/>
</dbReference>
<dbReference type="GO" id="GO:0030488">
    <property type="term" value="P:tRNA methylation"/>
    <property type="evidence" value="ECO:0007669"/>
    <property type="project" value="TreeGrafter"/>
</dbReference>
<dbReference type="GO" id="GO:0002098">
    <property type="term" value="P:tRNA wobble uridine modification"/>
    <property type="evidence" value="ECO:0007669"/>
    <property type="project" value="TreeGrafter"/>
</dbReference>
<dbReference type="CDD" id="cd04164">
    <property type="entry name" value="trmE"/>
    <property type="match status" value="1"/>
</dbReference>
<dbReference type="CDD" id="cd14858">
    <property type="entry name" value="TrmE_N"/>
    <property type="match status" value="1"/>
</dbReference>
<dbReference type="FunFam" id="3.40.50.300:FF:001376">
    <property type="entry name" value="tRNA modification GTPase MnmE"/>
    <property type="match status" value="1"/>
</dbReference>
<dbReference type="Gene3D" id="3.40.50.300">
    <property type="entry name" value="P-loop containing nucleotide triphosphate hydrolases"/>
    <property type="match status" value="1"/>
</dbReference>
<dbReference type="Gene3D" id="3.30.1360.120">
    <property type="entry name" value="Probable tRNA modification gtpase trme, domain 1"/>
    <property type="match status" value="1"/>
</dbReference>
<dbReference type="Gene3D" id="1.20.120.430">
    <property type="entry name" value="tRNA modification GTPase MnmE domain 2"/>
    <property type="match status" value="1"/>
</dbReference>
<dbReference type="HAMAP" id="MF_00379">
    <property type="entry name" value="GTPase_MnmE"/>
    <property type="match status" value="1"/>
</dbReference>
<dbReference type="InterPro" id="IPR031168">
    <property type="entry name" value="G_TrmE"/>
</dbReference>
<dbReference type="InterPro" id="IPR006073">
    <property type="entry name" value="GTP-bd"/>
</dbReference>
<dbReference type="InterPro" id="IPR018948">
    <property type="entry name" value="GTP-bd_TrmE_N"/>
</dbReference>
<dbReference type="InterPro" id="IPR004520">
    <property type="entry name" value="GTPase_MnmE"/>
</dbReference>
<dbReference type="InterPro" id="IPR027368">
    <property type="entry name" value="MnmE_dom2"/>
</dbReference>
<dbReference type="InterPro" id="IPR025867">
    <property type="entry name" value="MnmE_helical"/>
</dbReference>
<dbReference type="InterPro" id="IPR027417">
    <property type="entry name" value="P-loop_NTPase"/>
</dbReference>
<dbReference type="InterPro" id="IPR005225">
    <property type="entry name" value="Small_GTP-bd"/>
</dbReference>
<dbReference type="InterPro" id="IPR027266">
    <property type="entry name" value="TrmE/GcvT_dom1"/>
</dbReference>
<dbReference type="NCBIfam" id="TIGR00450">
    <property type="entry name" value="mnmE_trmE_thdF"/>
    <property type="match status" value="1"/>
</dbReference>
<dbReference type="NCBIfam" id="TIGR00231">
    <property type="entry name" value="small_GTP"/>
    <property type="match status" value="1"/>
</dbReference>
<dbReference type="PANTHER" id="PTHR42714">
    <property type="entry name" value="TRNA MODIFICATION GTPASE GTPBP3"/>
    <property type="match status" value="1"/>
</dbReference>
<dbReference type="PANTHER" id="PTHR42714:SF2">
    <property type="entry name" value="TRNA MODIFICATION GTPASE GTPBP3, MITOCHONDRIAL"/>
    <property type="match status" value="1"/>
</dbReference>
<dbReference type="Pfam" id="PF01926">
    <property type="entry name" value="MMR_HSR1"/>
    <property type="match status" value="1"/>
</dbReference>
<dbReference type="Pfam" id="PF12631">
    <property type="entry name" value="MnmE_helical"/>
    <property type="match status" value="1"/>
</dbReference>
<dbReference type="Pfam" id="PF10396">
    <property type="entry name" value="TrmE_N"/>
    <property type="match status" value="1"/>
</dbReference>
<dbReference type="SUPFAM" id="SSF103025">
    <property type="entry name" value="Folate-binding domain"/>
    <property type="match status" value="1"/>
</dbReference>
<dbReference type="SUPFAM" id="SSF52540">
    <property type="entry name" value="P-loop containing nucleoside triphosphate hydrolases"/>
    <property type="match status" value="1"/>
</dbReference>
<dbReference type="PROSITE" id="PS51709">
    <property type="entry name" value="G_TRME"/>
    <property type="match status" value="1"/>
</dbReference>
<reference key="1">
    <citation type="journal article" date="2000" name="Nature">
        <title>The genome sequence of the food-borne pathogen Campylobacter jejuni reveals hypervariable sequences.</title>
        <authorList>
            <person name="Parkhill J."/>
            <person name="Wren B.W."/>
            <person name="Mungall K.L."/>
            <person name="Ketley J.M."/>
            <person name="Churcher C.M."/>
            <person name="Basham D."/>
            <person name="Chillingworth T."/>
            <person name="Davies R.M."/>
            <person name="Feltwell T."/>
            <person name="Holroyd S."/>
            <person name="Jagels K."/>
            <person name="Karlyshev A.V."/>
            <person name="Moule S."/>
            <person name="Pallen M.J."/>
            <person name="Penn C.W."/>
            <person name="Quail M.A."/>
            <person name="Rajandream M.A."/>
            <person name="Rutherford K.M."/>
            <person name="van Vliet A.H.M."/>
            <person name="Whitehead S."/>
            <person name="Barrell B.G."/>
        </authorList>
    </citation>
    <scope>NUCLEOTIDE SEQUENCE [LARGE SCALE GENOMIC DNA]</scope>
    <source>
        <strain>ATCC 700819 / NCTC 11168</strain>
    </source>
</reference>
<accession>Q9PNX9</accession>
<accession>Q0P9U3</accession>